<accession>P0C6S8</accession>
<name>LIGO3_HUMAN</name>
<gene>
    <name type="primary">LINGO3</name>
    <name type="synonym">LERN2</name>
    <name type="synonym">LRRN6B</name>
</gene>
<sequence>MTCWLCVLSLPLLLLPAAPPPAGGCPARCECTVQTRAVACTRRRLTAVPDGIPAETRLLELSRNRIRCLNPGDLAALPALEELDLSENAIAHVEPGAFANLPRLRVLRLRGNQLKLIPPGVFTRLDNLTLLDLSENKLVILLDYTFQDLHSLRRLEVGDNDLVFVSRRAFAGLLALEELTLERCNLTALSGESLGHLRSLGALRLRHLAIASLEDQNFRRLPGLLHLEIDNWPLLEEVAAGSLRGLNLTSLSVTHTNITAVPAAALRHQAHLTCLNLSHNPISTVPRGSFRDLVRLRELHLAGALLAVVEPQAFLGLRQIRLLNLSNNLLSTLEESTFHSVNTLETLRVDGNPLACDCRLLWIVQRRKTLNFDGRLPACATPAEVRGDALRNLPDSVLFEYFVCRKPKIRERRLQRVTATAGEDVRFLCRAEGEPAPTVAWVTPQHRPVTATSAGRARVLPGGTLEIQDARPQDSGTYTCVASNAGGNDTYFATLTVRPEPAANRTPGEAHNETLAALRAPLDLTTILVSTAMGCITFLGVVLFCFVLLFVWSRGRGQHKNNFSVEYSFRKVDGPAAAAGQGGARKFNMKMI</sequence>
<feature type="signal peptide" evidence="1">
    <location>
        <begin position="1"/>
        <end position="24"/>
    </location>
</feature>
<feature type="chain" id="PRO_0000326529" description="Leucine-rich repeat and immunoglobulin-like domain-containing nogo receptor-interacting protein 3">
    <location>
        <begin position="25"/>
        <end position="592"/>
    </location>
</feature>
<feature type="topological domain" description="Extracellular" evidence="1">
    <location>
        <begin position="25"/>
        <end position="531"/>
    </location>
</feature>
<feature type="transmembrane region" description="Helical" evidence="1">
    <location>
        <begin position="532"/>
        <end position="552"/>
    </location>
</feature>
<feature type="topological domain" description="Cytoplasmic" evidence="1">
    <location>
        <begin position="553"/>
        <end position="592"/>
    </location>
</feature>
<feature type="domain" description="LRRNT">
    <location>
        <begin position="25"/>
        <end position="54"/>
    </location>
</feature>
<feature type="repeat" description="LRR 1">
    <location>
        <begin position="55"/>
        <end position="76"/>
    </location>
</feature>
<feature type="repeat" description="LRR 2">
    <location>
        <begin position="79"/>
        <end position="100"/>
    </location>
</feature>
<feature type="repeat" description="LRR 3">
    <location>
        <begin position="103"/>
        <end position="124"/>
    </location>
</feature>
<feature type="repeat" description="LRR 4">
    <location>
        <begin position="127"/>
        <end position="148"/>
    </location>
</feature>
<feature type="repeat" description="LRR 5">
    <location>
        <begin position="151"/>
        <end position="172"/>
    </location>
</feature>
<feature type="repeat" description="LRR 6">
    <location>
        <begin position="175"/>
        <end position="196"/>
    </location>
</feature>
<feature type="repeat" description="LRR 7">
    <location>
        <begin position="207"/>
        <end position="228"/>
    </location>
</feature>
<feature type="repeat" description="LRR 8">
    <location>
        <begin position="247"/>
        <end position="268"/>
    </location>
</feature>
<feature type="repeat" description="LRR 9">
    <location>
        <begin position="271"/>
        <end position="292"/>
    </location>
</feature>
<feature type="repeat" description="LRR 10">
    <location>
        <begin position="295"/>
        <end position="316"/>
    </location>
</feature>
<feature type="repeat" description="LRR 11">
    <location>
        <begin position="319"/>
        <end position="340"/>
    </location>
</feature>
<feature type="domain" description="LRRCT">
    <location>
        <begin position="352"/>
        <end position="406"/>
    </location>
</feature>
<feature type="domain" description="Ig-like C2-type">
    <location>
        <begin position="407"/>
        <end position="496"/>
    </location>
</feature>
<feature type="glycosylation site" description="N-linked (GlcNAc...) asparagine" evidence="1">
    <location>
        <position position="127"/>
    </location>
</feature>
<feature type="glycosylation site" description="N-linked (GlcNAc...) asparagine" evidence="1">
    <location>
        <position position="185"/>
    </location>
</feature>
<feature type="glycosylation site" description="N-linked (GlcNAc...) asparagine" evidence="1">
    <location>
        <position position="247"/>
    </location>
</feature>
<feature type="glycosylation site" description="N-linked (GlcNAc...) asparagine" evidence="1">
    <location>
        <position position="257"/>
    </location>
</feature>
<feature type="glycosylation site" description="N-linked (GlcNAc...) asparagine" evidence="1">
    <location>
        <position position="276"/>
    </location>
</feature>
<feature type="glycosylation site" description="N-linked (GlcNAc...) asparagine" evidence="1">
    <location>
        <position position="324"/>
    </location>
</feature>
<feature type="glycosylation site" description="N-linked (GlcNAc...) asparagine" evidence="1">
    <location>
        <position position="488"/>
    </location>
</feature>
<feature type="glycosylation site" description="N-linked (GlcNAc...) asparagine" evidence="1">
    <location>
        <position position="512"/>
    </location>
</feature>
<feature type="disulfide bond" evidence="2">
    <location>
        <begin position="429"/>
        <end position="480"/>
    </location>
</feature>
<feature type="sequence variant" id="VAR_059395" description="In dbSNP:rs7258841.">
    <original>R</original>
    <variation>H</variation>
    <location>
        <position position="426"/>
    </location>
</feature>
<keyword id="KW-1015">Disulfide bond</keyword>
<keyword id="KW-0325">Glycoprotein</keyword>
<keyword id="KW-0393">Immunoglobulin domain</keyword>
<keyword id="KW-0433">Leucine-rich repeat</keyword>
<keyword id="KW-0472">Membrane</keyword>
<keyword id="KW-1267">Proteomics identification</keyword>
<keyword id="KW-1185">Reference proteome</keyword>
<keyword id="KW-0677">Repeat</keyword>
<keyword id="KW-0732">Signal</keyword>
<keyword id="KW-0812">Transmembrane</keyword>
<keyword id="KW-1133">Transmembrane helix</keyword>
<reference key="1">
    <citation type="journal article" date="2004" name="Nature">
        <title>The DNA sequence and biology of human chromosome 19.</title>
        <authorList>
            <person name="Grimwood J."/>
            <person name="Gordon L.A."/>
            <person name="Olsen A.S."/>
            <person name="Terry A."/>
            <person name="Schmutz J."/>
            <person name="Lamerdin J.E."/>
            <person name="Hellsten U."/>
            <person name="Goodstein D."/>
            <person name="Couronne O."/>
            <person name="Tran-Gyamfi M."/>
            <person name="Aerts A."/>
            <person name="Altherr M."/>
            <person name="Ashworth L."/>
            <person name="Bajorek E."/>
            <person name="Black S."/>
            <person name="Branscomb E."/>
            <person name="Caenepeel S."/>
            <person name="Carrano A.V."/>
            <person name="Caoile C."/>
            <person name="Chan Y.M."/>
            <person name="Christensen M."/>
            <person name="Cleland C.A."/>
            <person name="Copeland A."/>
            <person name="Dalin E."/>
            <person name="Dehal P."/>
            <person name="Denys M."/>
            <person name="Detter J.C."/>
            <person name="Escobar J."/>
            <person name="Flowers D."/>
            <person name="Fotopulos D."/>
            <person name="Garcia C."/>
            <person name="Georgescu A.M."/>
            <person name="Glavina T."/>
            <person name="Gomez M."/>
            <person name="Gonzales E."/>
            <person name="Groza M."/>
            <person name="Hammon N."/>
            <person name="Hawkins T."/>
            <person name="Haydu L."/>
            <person name="Ho I."/>
            <person name="Huang W."/>
            <person name="Israni S."/>
            <person name="Jett J."/>
            <person name="Kadner K."/>
            <person name="Kimball H."/>
            <person name="Kobayashi A."/>
            <person name="Larionov V."/>
            <person name="Leem S.-H."/>
            <person name="Lopez F."/>
            <person name="Lou Y."/>
            <person name="Lowry S."/>
            <person name="Malfatti S."/>
            <person name="Martinez D."/>
            <person name="McCready P.M."/>
            <person name="Medina C."/>
            <person name="Morgan J."/>
            <person name="Nelson K."/>
            <person name="Nolan M."/>
            <person name="Ovcharenko I."/>
            <person name="Pitluck S."/>
            <person name="Pollard M."/>
            <person name="Popkie A.P."/>
            <person name="Predki P."/>
            <person name="Quan G."/>
            <person name="Ramirez L."/>
            <person name="Rash S."/>
            <person name="Retterer J."/>
            <person name="Rodriguez A."/>
            <person name="Rogers S."/>
            <person name="Salamov A."/>
            <person name="Salazar A."/>
            <person name="She X."/>
            <person name="Smith D."/>
            <person name="Slezak T."/>
            <person name="Solovyev V."/>
            <person name="Thayer N."/>
            <person name="Tice H."/>
            <person name="Tsai M."/>
            <person name="Ustaszewska A."/>
            <person name="Vo N."/>
            <person name="Wagner M."/>
            <person name="Wheeler J."/>
            <person name="Wu K."/>
            <person name="Xie G."/>
            <person name="Yang J."/>
            <person name="Dubchak I."/>
            <person name="Furey T.S."/>
            <person name="DeJong P."/>
            <person name="Dickson M."/>
            <person name="Gordon D."/>
            <person name="Eichler E.E."/>
            <person name="Pennacchio L.A."/>
            <person name="Richardson P."/>
            <person name="Stubbs L."/>
            <person name="Rokhsar D.S."/>
            <person name="Myers R.M."/>
            <person name="Rubin E.M."/>
            <person name="Lucas S.M."/>
        </authorList>
    </citation>
    <scope>NUCLEOTIDE SEQUENCE [LARGE SCALE GENOMIC DNA]</scope>
</reference>
<reference key="2">
    <citation type="journal article" date="2003" name="Eur. J. Neurosci.">
        <title>LRRN6A/LERN1 (leucine-rich repeat neuronal protein 1), a novel gene with enriched expression in limbic system and neocortex.</title>
        <authorList>
            <person name="Carim-Todd L."/>
            <person name="Escarceller M."/>
            <person name="Estivill X."/>
            <person name="Sumoy L."/>
        </authorList>
    </citation>
    <scope>IDENTIFICATION</scope>
</reference>
<organism>
    <name type="scientific">Homo sapiens</name>
    <name type="common">Human</name>
    <dbReference type="NCBI Taxonomy" id="9606"/>
    <lineage>
        <taxon>Eukaryota</taxon>
        <taxon>Metazoa</taxon>
        <taxon>Chordata</taxon>
        <taxon>Craniata</taxon>
        <taxon>Vertebrata</taxon>
        <taxon>Euteleostomi</taxon>
        <taxon>Mammalia</taxon>
        <taxon>Eutheria</taxon>
        <taxon>Euarchontoglires</taxon>
        <taxon>Primates</taxon>
        <taxon>Haplorrhini</taxon>
        <taxon>Catarrhini</taxon>
        <taxon>Hominidae</taxon>
        <taxon>Homo</taxon>
    </lineage>
</organism>
<proteinExistence type="evidence at protein level"/>
<protein>
    <recommendedName>
        <fullName>Leucine-rich repeat and immunoglobulin-like domain-containing nogo receptor-interacting protein 3</fullName>
    </recommendedName>
    <alternativeName>
        <fullName>Leucine-rich repeat neuronal protein 2</fullName>
    </alternativeName>
    <alternativeName>
        <fullName>Leucine-rich repeat neuronal protein 6B</fullName>
    </alternativeName>
</protein>
<dbReference type="EMBL" id="AC004152">
    <property type="status" value="NOT_ANNOTATED_CDS"/>
    <property type="molecule type" value="Genomic_DNA"/>
</dbReference>
<dbReference type="CCDS" id="CCDS45905.1"/>
<dbReference type="RefSeq" id="NP_001094861.1">
    <property type="nucleotide sequence ID" value="NM_001101391.3"/>
</dbReference>
<dbReference type="SMR" id="P0C6S8"/>
<dbReference type="FunCoup" id="P0C6S8">
    <property type="interactions" value="9"/>
</dbReference>
<dbReference type="STRING" id="9606.ENSP00000467753"/>
<dbReference type="GlyCosmos" id="P0C6S8">
    <property type="glycosylation" value="8 sites, No reported glycans"/>
</dbReference>
<dbReference type="GlyGen" id="P0C6S8">
    <property type="glycosylation" value="12 sites, 3 N-linked glycans (5 sites), 1 O-linked glycan (1 site)"/>
</dbReference>
<dbReference type="PhosphoSitePlus" id="P0C6S8"/>
<dbReference type="BioMuta" id="LINGO3"/>
<dbReference type="DMDM" id="182662399"/>
<dbReference type="MassIVE" id="P0C6S8"/>
<dbReference type="PaxDb" id="9606-ENSP00000467753"/>
<dbReference type="PeptideAtlas" id="P0C6S8"/>
<dbReference type="ProteomicsDB" id="52330"/>
<dbReference type="Antibodypedia" id="64907">
    <property type="antibodies" value="67 antibodies from 13 providers"/>
</dbReference>
<dbReference type="DNASU" id="645191"/>
<dbReference type="Ensembl" id="ENST00000585527.1">
    <property type="protein sequence ID" value="ENSP00000467753.2"/>
    <property type="gene ID" value="ENSG00000220008.4"/>
</dbReference>
<dbReference type="Ensembl" id="ENST00000698372.1">
    <property type="protein sequence ID" value="ENSP00000513689.1"/>
    <property type="gene ID" value="ENSG00000220008.4"/>
</dbReference>
<dbReference type="GeneID" id="645191"/>
<dbReference type="KEGG" id="hsa:645191"/>
<dbReference type="MANE-Select" id="ENST00000698372.1">
    <property type="protein sequence ID" value="ENSP00000513689.1"/>
    <property type="RefSeq nucleotide sequence ID" value="NM_001101391.3"/>
    <property type="RefSeq protein sequence ID" value="NP_001094861.1"/>
</dbReference>
<dbReference type="UCSC" id="uc060rka.1">
    <property type="organism name" value="human"/>
</dbReference>
<dbReference type="AGR" id="HGNC:21206"/>
<dbReference type="CTD" id="645191"/>
<dbReference type="DisGeNET" id="645191"/>
<dbReference type="GeneCards" id="LINGO3"/>
<dbReference type="HGNC" id="HGNC:21206">
    <property type="gene designation" value="LINGO3"/>
</dbReference>
<dbReference type="HPA" id="ENSG00000220008">
    <property type="expression patterns" value="Tissue enhanced (brain, lymphoid tissue)"/>
</dbReference>
<dbReference type="MIM" id="609792">
    <property type="type" value="gene"/>
</dbReference>
<dbReference type="neXtProt" id="NX_P0C6S8"/>
<dbReference type="OpenTargets" id="ENSG00000220008"/>
<dbReference type="PharmGKB" id="PA162394097"/>
<dbReference type="VEuPathDB" id="HostDB:ENSG00000220008"/>
<dbReference type="eggNOG" id="KOG0619">
    <property type="taxonomic scope" value="Eukaryota"/>
</dbReference>
<dbReference type="GeneTree" id="ENSGT00940000162661"/>
<dbReference type="HOGENOM" id="CLU_000288_18_24_1"/>
<dbReference type="InParanoid" id="P0C6S8"/>
<dbReference type="OMA" id="KFTMKMI"/>
<dbReference type="OrthoDB" id="10061535at2759"/>
<dbReference type="PAN-GO" id="P0C6S8">
    <property type="GO annotations" value="2 GO annotations based on evolutionary models"/>
</dbReference>
<dbReference type="PhylomeDB" id="P0C6S8"/>
<dbReference type="TreeFam" id="TF334360"/>
<dbReference type="PathwayCommons" id="P0C6S8"/>
<dbReference type="SignaLink" id="P0C6S8"/>
<dbReference type="BioGRID-ORCS" id="645191">
    <property type="hits" value="14 hits in 1134 CRISPR screens"/>
</dbReference>
<dbReference type="GenomeRNAi" id="645191"/>
<dbReference type="Pharos" id="P0C6S8">
    <property type="development level" value="Tdark"/>
</dbReference>
<dbReference type="PRO" id="PR:P0C6S8"/>
<dbReference type="Proteomes" id="UP000005640">
    <property type="component" value="Chromosome 19"/>
</dbReference>
<dbReference type="RNAct" id="P0C6S8">
    <property type="molecule type" value="protein"/>
</dbReference>
<dbReference type="Bgee" id="ENSG00000220008">
    <property type="expression patterns" value="Expressed in nucleus accumbens and 81 other cell types or tissues"/>
</dbReference>
<dbReference type="GO" id="GO:0031012">
    <property type="term" value="C:extracellular matrix"/>
    <property type="evidence" value="ECO:0000318"/>
    <property type="project" value="GO_Central"/>
</dbReference>
<dbReference type="GO" id="GO:0005615">
    <property type="term" value="C:extracellular space"/>
    <property type="evidence" value="ECO:0000318"/>
    <property type="project" value="GO_Central"/>
</dbReference>
<dbReference type="GO" id="GO:0016020">
    <property type="term" value="C:membrane"/>
    <property type="evidence" value="ECO:0007669"/>
    <property type="project" value="UniProtKB-SubCell"/>
</dbReference>
<dbReference type="FunFam" id="2.60.40.10:FF:000076">
    <property type="entry name" value="Leucine-rich repeat and Ig domain-containing 4"/>
    <property type="match status" value="1"/>
</dbReference>
<dbReference type="FunFam" id="3.80.10.10:FF:000014">
    <property type="entry name" value="Leucine-rich repeat and immunoglobulin-like domain-containing nogo receptor-interacting protein 1"/>
    <property type="match status" value="1"/>
</dbReference>
<dbReference type="Gene3D" id="2.60.40.10">
    <property type="entry name" value="Immunoglobulins"/>
    <property type="match status" value="1"/>
</dbReference>
<dbReference type="Gene3D" id="3.80.10.10">
    <property type="entry name" value="Ribonuclease Inhibitor"/>
    <property type="match status" value="1"/>
</dbReference>
<dbReference type="InterPro" id="IPR000483">
    <property type="entry name" value="Cys-rich_flank_reg_C"/>
</dbReference>
<dbReference type="InterPro" id="IPR007110">
    <property type="entry name" value="Ig-like_dom"/>
</dbReference>
<dbReference type="InterPro" id="IPR036179">
    <property type="entry name" value="Ig-like_dom_sf"/>
</dbReference>
<dbReference type="InterPro" id="IPR013783">
    <property type="entry name" value="Ig-like_fold"/>
</dbReference>
<dbReference type="InterPro" id="IPR013098">
    <property type="entry name" value="Ig_I-set"/>
</dbReference>
<dbReference type="InterPro" id="IPR003599">
    <property type="entry name" value="Ig_sub"/>
</dbReference>
<dbReference type="InterPro" id="IPR003598">
    <property type="entry name" value="Ig_sub2"/>
</dbReference>
<dbReference type="InterPro" id="IPR001611">
    <property type="entry name" value="Leu-rich_rpt"/>
</dbReference>
<dbReference type="InterPro" id="IPR003591">
    <property type="entry name" value="Leu-rich_rpt_typical-subtyp"/>
</dbReference>
<dbReference type="InterPro" id="IPR032675">
    <property type="entry name" value="LRR_dom_sf"/>
</dbReference>
<dbReference type="InterPro" id="IPR050541">
    <property type="entry name" value="LRR_TM_domain-containing"/>
</dbReference>
<dbReference type="InterPro" id="IPR000372">
    <property type="entry name" value="LRRNT"/>
</dbReference>
<dbReference type="PANTHER" id="PTHR24369">
    <property type="entry name" value="ANTIGEN BSP, PUTATIVE-RELATED"/>
    <property type="match status" value="1"/>
</dbReference>
<dbReference type="PANTHER" id="PTHR24369:SF207">
    <property type="entry name" value="LEUCINE RICH REPEAT AND IG DOMAIN CONTAINING 3"/>
    <property type="match status" value="1"/>
</dbReference>
<dbReference type="Pfam" id="PF07679">
    <property type="entry name" value="I-set"/>
    <property type="match status" value="1"/>
</dbReference>
<dbReference type="Pfam" id="PF00560">
    <property type="entry name" value="LRR_1"/>
    <property type="match status" value="1"/>
</dbReference>
<dbReference type="Pfam" id="PF13855">
    <property type="entry name" value="LRR_8"/>
    <property type="match status" value="2"/>
</dbReference>
<dbReference type="SMART" id="SM00409">
    <property type="entry name" value="IG"/>
    <property type="match status" value="1"/>
</dbReference>
<dbReference type="SMART" id="SM00408">
    <property type="entry name" value="IGc2"/>
    <property type="match status" value="1"/>
</dbReference>
<dbReference type="SMART" id="SM00369">
    <property type="entry name" value="LRR_TYP"/>
    <property type="match status" value="9"/>
</dbReference>
<dbReference type="SMART" id="SM00082">
    <property type="entry name" value="LRRCT"/>
    <property type="match status" value="1"/>
</dbReference>
<dbReference type="SMART" id="SM00013">
    <property type="entry name" value="LRRNT"/>
    <property type="match status" value="1"/>
</dbReference>
<dbReference type="SUPFAM" id="SSF48726">
    <property type="entry name" value="Immunoglobulin"/>
    <property type="match status" value="1"/>
</dbReference>
<dbReference type="SUPFAM" id="SSF52058">
    <property type="entry name" value="L domain-like"/>
    <property type="match status" value="1"/>
</dbReference>
<dbReference type="PROSITE" id="PS50835">
    <property type="entry name" value="IG_LIKE"/>
    <property type="match status" value="1"/>
</dbReference>
<dbReference type="PROSITE" id="PS51450">
    <property type="entry name" value="LRR"/>
    <property type="match status" value="7"/>
</dbReference>
<evidence type="ECO:0000255" key="1"/>
<evidence type="ECO:0000255" key="2">
    <source>
        <dbReference type="PROSITE-ProRule" id="PRU00114"/>
    </source>
</evidence>
<evidence type="ECO:0000305" key="3"/>
<comment type="subcellular location">
    <subcellularLocation>
        <location evidence="3">Membrane</location>
        <topology evidence="3">Single-pass type I membrane protein</topology>
    </subcellularLocation>
</comment>